<evidence type="ECO:0000250" key="1"/>
<evidence type="ECO:0000255" key="2">
    <source>
        <dbReference type="HAMAP-Rule" id="MF_00436"/>
    </source>
</evidence>
<evidence type="ECO:0000255" key="3">
    <source>
        <dbReference type="PROSITE-ProRule" id="PRU01346"/>
    </source>
</evidence>
<evidence type="ECO:0000256" key="4">
    <source>
        <dbReference type="SAM" id="MobiDB-lite"/>
    </source>
</evidence>
<evidence type="ECO:0000269" key="5">
    <source>
    </source>
</evidence>
<evidence type="ECO:0000269" key="6">
    <source>
    </source>
</evidence>
<evidence type="ECO:0000303" key="7">
    <source>
    </source>
</evidence>
<evidence type="ECO:0000305" key="8"/>
<evidence type="ECO:0000305" key="9">
    <source>
    </source>
</evidence>
<evidence type="ECO:0007829" key="10">
    <source>
        <dbReference type="PDB" id="2YLB"/>
    </source>
</evidence>
<keyword id="KW-0002">3D-structure</keyword>
<keyword id="KW-1185">Reference proteome</keyword>
<keyword id="KW-0694">RNA-binding</keyword>
<keyword id="KW-0346">Stress response</keyword>
<keyword id="KW-0843">Virulence</keyword>
<comment type="function">
    <text evidence="2 5">RNA chaperone that binds small regulatory RNA (sRNAs) and mRNAs to facilitate mRNA translational regulation in response to envelope stress, environmental stress and changes in metabolite concentrations. Also binds with high specificity to tRNAs (By similarity). Plays a central regulatory role in the microbial response to space flight conditions. Is essential for virulence and is required for efficient invasion of non-phagocytic cells (PubMed:17163975).</text>
</comment>
<comment type="subunit">
    <text evidence="2">Homohexamer.</text>
</comment>
<comment type="interaction">
    <interactant intactId="EBI-15935266">
        <id>P0A1R0</id>
    </interactant>
    <interactant intactId="EBI-15935266">
        <id>P0A1R0</id>
        <label>hfq</label>
    </interactant>
    <organismsDiffer>false</organismsDiffer>
    <experiments>2</experiments>
</comment>
<comment type="disruption phenotype">
    <text evidence="5 6">Drastically decreases survival in host macrophages (PubMed:19229334). Cells display drastically reduced virulence in vitro and in vivo (PubMed:17163975, PubMed:19229334). Mice infected with the deletion mutant show no signs of illness during the course of the experiment (PubMed:17163975, PubMed:19229334).</text>
</comment>
<comment type="miscellaneous">
    <text evidence="9">Hfq expression was decreased during the space flight and expression of 64 genes of the hfq regulon was altered. Likewise, several small RNAs that interact with hfq were differentially regulated during the flight (PubMed:17901201).</text>
</comment>
<comment type="similarity">
    <text evidence="2">Belongs to the Hfq family.</text>
</comment>
<dbReference type="EMBL" id="U48735">
    <property type="protein sequence ID" value="AAA99108.1"/>
    <property type="molecule type" value="Genomic_DNA"/>
</dbReference>
<dbReference type="EMBL" id="AE006468">
    <property type="protein sequence ID" value="AAL23181.1"/>
    <property type="molecule type" value="Genomic_DNA"/>
</dbReference>
<dbReference type="RefSeq" id="NP_463222.1">
    <property type="nucleotide sequence ID" value="NC_003197.2"/>
</dbReference>
<dbReference type="RefSeq" id="WP_001051875.1">
    <property type="nucleotide sequence ID" value="NC_003197.2"/>
</dbReference>
<dbReference type="PDB" id="2YLB">
    <property type="method" value="X-ray"/>
    <property type="resolution" value="1.15 A"/>
    <property type="chains" value="A/B/C/D/E/F=1-72"/>
</dbReference>
<dbReference type="PDB" id="2YLC">
    <property type="method" value="X-ray"/>
    <property type="resolution" value="1.30 A"/>
    <property type="chains" value="A=1-72"/>
</dbReference>
<dbReference type="PDBsum" id="2YLB"/>
<dbReference type="PDBsum" id="2YLC"/>
<dbReference type="SMR" id="P0A1R0"/>
<dbReference type="DIP" id="DIP-59697N"/>
<dbReference type="STRING" id="99287.STM4361"/>
<dbReference type="PaxDb" id="99287-STM4361"/>
<dbReference type="GeneID" id="1255887"/>
<dbReference type="KEGG" id="stm:STM4361"/>
<dbReference type="PATRIC" id="fig|99287.12.peg.4585"/>
<dbReference type="HOGENOM" id="CLU_113688_2_1_6"/>
<dbReference type="OMA" id="QQMVYKH"/>
<dbReference type="PhylomeDB" id="P0A1R0"/>
<dbReference type="BioCyc" id="SENT99287:STM4361-MONOMER"/>
<dbReference type="EvolutionaryTrace" id="P0A1R0"/>
<dbReference type="PHI-base" id="PHI:2687"/>
<dbReference type="Proteomes" id="UP000001014">
    <property type="component" value="Chromosome"/>
</dbReference>
<dbReference type="GO" id="GO:0005829">
    <property type="term" value="C:cytosol"/>
    <property type="evidence" value="ECO:0000318"/>
    <property type="project" value="GO_Central"/>
</dbReference>
<dbReference type="GO" id="GO:0042802">
    <property type="term" value="F:identical protein binding"/>
    <property type="evidence" value="ECO:0000353"/>
    <property type="project" value="IntAct"/>
</dbReference>
<dbReference type="GO" id="GO:0003723">
    <property type="term" value="F:RNA binding"/>
    <property type="evidence" value="ECO:0000318"/>
    <property type="project" value="GO_Central"/>
</dbReference>
<dbReference type="GO" id="GO:0006355">
    <property type="term" value="P:regulation of DNA-templated transcription"/>
    <property type="evidence" value="ECO:0007669"/>
    <property type="project" value="InterPro"/>
</dbReference>
<dbReference type="GO" id="GO:0043487">
    <property type="term" value="P:regulation of RNA stability"/>
    <property type="evidence" value="ECO:0000318"/>
    <property type="project" value="GO_Central"/>
</dbReference>
<dbReference type="GO" id="GO:0045974">
    <property type="term" value="P:regulation of translation, ncRNA-mediated"/>
    <property type="evidence" value="ECO:0000318"/>
    <property type="project" value="GO_Central"/>
</dbReference>
<dbReference type="CDD" id="cd01716">
    <property type="entry name" value="Hfq"/>
    <property type="match status" value="1"/>
</dbReference>
<dbReference type="FunFam" id="2.30.30.100:FF:000001">
    <property type="entry name" value="RNA-binding protein Hfq"/>
    <property type="match status" value="1"/>
</dbReference>
<dbReference type="Gene3D" id="2.30.30.100">
    <property type="match status" value="1"/>
</dbReference>
<dbReference type="HAMAP" id="MF_00436">
    <property type="entry name" value="Hfq"/>
    <property type="match status" value="1"/>
</dbReference>
<dbReference type="InterPro" id="IPR005001">
    <property type="entry name" value="Hfq"/>
</dbReference>
<dbReference type="InterPro" id="IPR010920">
    <property type="entry name" value="LSM_dom_sf"/>
</dbReference>
<dbReference type="InterPro" id="IPR047575">
    <property type="entry name" value="Sm"/>
</dbReference>
<dbReference type="NCBIfam" id="TIGR02383">
    <property type="entry name" value="Hfq"/>
    <property type="match status" value="1"/>
</dbReference>
<dbReference type="NCBIfam" id="NF001602">
    <property type="entry name" value="PRK00395.1"/>
    <property type="match status" value="1"/>
</dbReference>
<dbReference type="PANTHER" id="PTHR34772">
    <property type="entry name" value="RNA-BINDING PROTEIN HFQ"/>
    <property type="match status" value="1"/>
</dbReference>
<dbReference type="PANTHER" id="PTHR34772:SF1">
    <property type="entry name" value="RNA-BINDING PROTEIN HFQ"/>
    <property type="match status" value="1"/>
</dbReference>
<dbReference type="Pfam" id="PF17209">
    <property type="entry name" value="Hfq"/>
    <property type="match status" value="1"/>
</dbReference>
<dbReference type="SUPFAM" id="SSF50182">
    <property type="entry name" value="Sm-like ribonucleoproteins"/>
    <property type="match status" value="1"/>
</dbReference>
<dbReference type="PROSITE" id="PS52002">
    <property type="entry name" value="SM"/>
    <property type="match status" value="1"/>
</dbReference>
<name>HFQ_SALTY</name>
<gene>
    <name evidence="2" type="primary">hfq</name>
    <name type="ordered locus">STM4361</name>
</gene>
<accession>P0A1R0</accession>
<accession>Q56059</accession>
<reference key="1">
    <citation type="journal article" date="1996" name="J. Bacteriol.">
        <title>Efficient translation of the RpoS sigma factor in Salmonella typhimurium requires host factor I, an RNA-binding protein encoded by the hfq gene.</title>
        <authorList>
            <person name="Brown L."/>
            <person name="Elliott T."/>
        </authorList>
    </citation>
    <scope>NUCLEOTIDE SEQUENCE [GENOMIC DNA]</scope>
    <source>
        <strain>LT2</strain>
    </source>
</reference>
<reference key="2">
    <citation type="journal article" date="2001" name="Nature">
        <title>Complete genome sequence of Salmonella enterica serovar Typhimurium LT2.</title>
        <authorList>
            <person name="McClelland M."/>
            <person name="Sanderson K.E."/>
            <person name="Spieth J."/>
            <person name="Clifton S.W."/>
            <person name="Latreille P."/>
            <person name="Courtney L."/>
            <person name="Porwollik S."/>
            <person name="Ali J."/>
            <person name="Dante M."/>
            <person name="Du F."/>
            <person name="Hou S."/>
            <person name="Layman D."/>
            <person name="Leonard S."/>
            <person name="Nguyen C."/>
            <person name="Scott K."/>
            <person name="Holmes A."/>
            <person name="Grewal N."/>
            <person name="Mulvaney E."/>
            <person name="Ryan E."/>
            <person name="Sun H."/>
            <person name="Florea L."/>
            <person name="Miller W."/>
            <person name="Stoneking T."/>
            <person name="Nhan M."/>
            <person name="Waterston R."/>
            <person name="Wilson R.K."/>
        </authorList>
    </citation>
    <scope>NUCLEOTIDE SEQUENCE [LARGE SCALE GENOMIC DNA]</scope>
    <source>
        <strain>LT2 / SGSC1412 / ATCC 700720</strain>
    </source>
</reference>
<reference key="3">
    <citation type="journal article" date="2007" name="Mol. Microbiol.">
        <title>The RNA chaperone Hfq is essential for the virulence of Salmonella typhimurium.</title>
        <authorList>
            <person name="Sittka A."/>
            <person name="Pfeiffer V."/>
            <person name="Tedin K."/>
            <person name="Vogel J."/>
        </authorList>
    </citation>
    <scope>FUNCTION IN VIRULENCE</scope>
    <scope>DISRUPTION PHENOTYPE</scope>
</reference>
<reference key="4">
    <citation type="journal article" date="2007" name="Proc. Natl. Acad. Sci. U.S.A.">
        <title>Space flight alters bacterial gene expression and virulence and reveals a role for global regulator Hfq.</title>
        <authorList>
            <person name="Wilson J.W."/>
            <person name="Ott C.M."/>
            <person name="Honer zu Bentrup K."/>
            <person name="Ramamurthy R."/>
            <person name="Quick L."/>
            <person name="Porwollik S."/>
            <person name="Cheng P."/>
            <person name="McClelland M."/>
            <person name="Tsaprailis G."/>
            <person name="Radabaugh T."/>
            <person name="Hunt A."/>
            <person name="Fernandez D."/>
            <person name="Richter E."/>
            <person name="Shah M."/>
            <person name="Kilcoyne M."/>
            <person name="Joshi L."/>
            <person name="Nelman-Gonzalez M."/>
            <person name="Hing S."/>
            <person name="Parra M."/>
            <person name="Dumars P."/>
            <person name="Norwood K."/>
            <person name="Bober R."/>
            <person name="Devich J."/>
            <person name="Ruggles A."/>
            <person name="Goulart C."/>
            <person name="Rupert M."/>
            <person name="Stodieck L."/>
            <person name="Stafford P."/>
            <person name="Catella L."/>
            <person name="Schurr M.J."/>
            <person name="Buchanan K."/>
            <person name="Morici L."/>
            <person name="McCracken J."/>
            <person name="Allen P."/>
            <person name="Baker-Coleman C."/>
            <person name="Hammond T."/>
            <person name="Vogel J."/>
            <person name="Nelson R."/>
            <person name="Pierson D.L."/>
            <person name="Stefanyshyn-Piper H.M."/>
            <person name="Nickerson C.A."/>
        </authorList>
    </citation>
    <scope>EFFECT OF SPACE FLIGHT CONDITIONS ON HFQ</scope>
    <source>
        <strain>SL1344</strain>
    </source>
</reference>
<reference key="5">
    <citation type="journal article" date="2009" name="PLoS Pathog.">
        <title>Coordinated regulation of virulence during systemic infection of Salmonella enterica serovar Typhimurium.</title>
        <authorList>
            <person name="Yoon H."/>
            <person name="McDermott J.E."/>
            <person name="Porwollik S."/>
            <person name="McClelland M."/>
            <person name="Heffron F."/>
        </authorList>
    </citation>
    <scope>DISRUPTION PHENOTYPE</scope>
    <source>
        <strain evidence="7">14028s / SGSC 2262</strain>
    </source>
</reference>
<proteinExistence type="evidence at protein level"/>
<organism>
    <name type="scientific">Salmonella typhimurium (strain LT2 / SGSC1412 / ATCC 700720)</name>
    <dbReference type="NCBI Taxonomy" id="99287"/>
    <lineage>
        <taxon>Bacteria</taxon>
        <taxon>Pseudomonadati</taxon>
        <taxon>Pseudomonadota</taxon>
        <taxon>Gammaproteobacteria</taxon>
        <taxon>Enterobacterales</taxon>
        <taxon>Enterobacteriaceae</taxon>
        <taxon>Salmonella</taxon>
    </lineage>
</organism>
<protein>
    <recommendedName>
        <fullName evidence="2">RNA-binding protein Hfq</fullName>
    </recommendedName>
</protein>
<feature type="initiator methionine" description="Removed" evidence="1">
    <location>
        <position position="1"/>
    </location>
</feature>
<feature type="chain" id="PRO_0000095606" description="RNA-binding protein Hfq">
    <location>
        <begin position="2"/>
        <end position="102"/>
    </location>
</feature>
<feature type="domain" description="Sm" evidence="3">
    <location>
        <begin position="9"/>
        <end position="68"/>
    </location>
</feature>
<feature type="region of interest" description="Disordered" evidence="4">
    <location>
        <begin position="63"/>
        <end position="102"/>
    </location>
</feature>
<feature type="compositionally biased region" description="Low complexity" evidence="4">
    <location>
        <begin position="70"/>
        <end position="88"/>
    </location>
</feature>
<feature type="sequence conflict" description="In Ref. 1; AAA99108." evidence="8" ref="1">
    <original>NA</original>
    <variation>KP</variation>
    <location>
        <begin position="13"/>
        <end position="14"/>
    </location>
</feature>
<feature type="helix" evidence="10">
    <location>
        <begin position="8"/>
        <end position="18"/>
    </location>
</feature>
<feature type="strand" evidence="10">
    <location>
        <begin position="22"/>
        <end position="26"/>
    </location>
</feature>
<feature type="strand" evidence="10">
    <location>
        <begin position="31"/>
        <end position="39"/>
    </location>
</feature>
<feature type="strand" evidence="10">
    <location>
        <begin position="41"/>
        <end position="55"/>
    </location>
</feature>
<feature type="helix" evidence="10">
    <location>
        <begin position="56"/>
        <end position="58"/>
    </location>
</feature>
<feature type="strand" evidence="10">
    <location>
        <begin position="59"/>
        <end position="66"/>
    </location>
</feature>
<sequence>MAKGQSLQDPFLNALRRERVPVSIYLVNGIKLQGQIESFDQFVILLKNTVSQMVYKHAISTVVPSRPVSHHSNNAGGGASNNYHHGSNAQGSTAQQDSEETE</sequence>